<keyword id="KW-0520">NAD</keyword>
<keyword id="KW-0560">Oxidoreductase</keyword>
<keyword id="KW-0816">Tricarboxylic acid cycle</keyword>
<protein>
    <recommendedName>
        <fullName evidence="1">Malate dehydrogenase</fullName>
        <ecNumber evidence="1">1.1.1.37</ecNumber>
    </recommendedName>
</protein>
<comment type="function">
    <text evidence="1">Catalyzes the reversible oxidation of malate to oxaloacetate.</text>
</comment>
<comment type="catalytic activity">
    <reaction evidence="1">
        <text>(S)-malate + NAD(+) = oxaloacetate + NADH + H(+)</text>
        <dbReference type="Rhea" id="RHEA:21432"/>
        <dbReference type="ChEBI" id="CHEBI:15378"/>
        <dbReference type="ChEBI" id="CHEBI:15589"/>
        <dbReference type="ChEBI" id="CHEBI:16452"/>
        <dbReference type="ChEBI" id="CHEBI:57540"/>
        <dbReference type="ChEBI" id="CHEBI:57945"/>
        <dbReference type="EC" id="1.1.1.37"/>
    </reaction>
</comment>
<comment type="similarity">
    <text evidence="1">Belongs to the LDH/MDH superfamily. MDH type 2 family.</text>
</comment>
<reference key="1">
    <citation type="journal article" date="2008" name="PLoS ONE">
        <title>Comparative analysis of Acinetobacters: three genomes for three lifestyles.</title>
        <authorList>
            <person name="Vallenet D."/>
            <person name="Nordmann P."/>
            <person name="Barbe V."/>
            <person name="Poirel L."/>
            <person name="Mangenot S."/>
            <person name="Bataille E."/>
            <person name="Dossat C."/>
            <person name="Gas S."/>
            <person name="Kreimeyer A."/>
            <person name="Lenoble P."/>
            <person name="Oztas S."/>
            <person name="Poulain J."/>
            <person name="Segurens B."/>
            <person name="Robert C."/>
            <person name="Abergel C."/>
            <person name="Claverie J.-M."/>
            <person name="Raoult D."/>
            <person name="Medigue C."/>
            <person name="Weissenbach J."/>
            <person name="Cruveiller S."/>
        </authorList>
    </citation>
    <scope>NUCLEOTIDE SEQUENCE [LARGE SCALE GENOMIC DNA]</scope>
    <source>
        <strain>SDF</strain>
    </source>
</reference>
<gene>
    <name evidence="1" type="primary">mdh</name>
    <name type="ordered locus">ABSDF0482</name>
</gene>
<accession>B0VQX5</accession>
<sequence>MKQPVRVAVTGAAGQIGYSLLFRIASGEMLGKDQPVILQLLEVPVEKAQQALKGVMMELDDCAFPLLAGMIGTDDPKVAFKDADYALLVGSRPRGPGMERADLLKVNGEIFIGQGQALNEVASRDVKVLVVGNPANTNAYIAMKSAPDLPAKNFTAMLRLDHNRALTQVAQKAGVVVADIEKLTVWGNHSPTMYADYRFATANGESLKDKINDPAWNKDVFLPTVGKRGAAIIEARGLSSAASAANAAIDHMRDWALGTNGKWVTMGVPSDGSYGIPEGVMFGFPVTTENGEYKIVQGLEIDEFSRERINFTLNELEEERAAIADMVK</sequence>
<evidence type="ECO:0000255" key="1">
    <source>
        <dbReference type="HAMAP-Rule" id="MF_01517"/>
    </source>
</evidence>
<proteinExistence type="inferred from homology"/>
<dbReference type="EC" id="1.1.1.37" evidence="1"/>
<dbReference type="EMBL" id="CU468230">
    <property type="protein sequence ID" value="CAO99871.1"/>
    <property type="molecule type" value="Genomic_DNA"/>
</dbReference>
<dbReference type="SMR" id="B0VQX5"/>
<dbReference type="KEGG" id="abm:ABSDF0482"/>
<dbReference type="HOGENOM" id="CLU_040727_2_0_6"/>
<dbReference type="Proteomes" id="UP000001741">
    <property type="component" value="Chromosome"/>
</dbReference>
<dbReference type="GO" id="GO:0030060">
    <property type="term" value="F:L-malate dehydrogenase (NAD+) activity"/>
    <property type="evidence" value="ECO:0007669"/>
    <property type="project" value="UniProtKB-UniRule"/>
</dbReference>
<dbReference type="GO" id="GO:0006108">
    <property type="term" value="P:malate metabolic process"/>
    <property type="evidence" value="ECO:0007669"/>
    <property type="project" value="InterPro"/>
</dbReference>
<dbReference type="GO" id="GO:0006099">
    <property type="term" value="P:tricarboxylic acid cycle"/>
    <property type="evidence" value="ECO:0007669"/>
    <property type="project" value="UniProtKB-UniRule"/>
</dbReference>
<dbReference type="CDD" id="cd01338">
    <property type="entry name" value="MDH_chloroplast-like"/>
    <property type="match status" value="1"/>
</dbReference>
<dbReference type="FunFam" id="3.40.50.720:FF:000010">
    <property type="entry name" value="Malate dehydrogenase"/>
    <property type="match status" value="1"/>
</dbReference>
<dbReference type="FunFam" id="3.90.110.10:FF:000002">
    <property type="entry name" value="Malate dehydrogenase"/>
    <property type="match status" value="1"/>
</dbReference>
<dbReference type="Gene3D" id="3.90.110.10">
    <property type="entry name" value="Lactate dehydrogenase/glycoside hydrolase, family 4, C-terminal"/>
    <property type="match status" value="1"/>
</dbReference>
<dbReference type="Gene3D" id="3.40.50.720">
    <property type="entry name" value="NAD(P)-binding Rossmann-like Domain"/>
    <property type="match status" value="1"/>
</dbReference>
<dbReference type="HAMAP" id="MF_01517">
    <property type="entry name" value="Malate_dehydrog_2"/>
    <property type="match status" value="1"/>
</dbReference>
<dbReference type="InterPro" id="IPR001557">
    <property type="entry name" value="L-lactate/malate_DH"/>
</dbReference>
<dbReference type="InterPro" id="IPR022383">
    <property type="entry name" value="Lactate/malate_DH_C"/>
</dbReference>
<dbReference type="InterPro" id="IPR001236">
    <property type="entry name" value="Lactate/malate_DH_N"/>
</dbReference>
<dbReference type="InterPro" id="IPR015955">
    <property type="entry name" value="Lactate_DH/Glyco_Ohase_4_C"/>
</dbReference>
<dbReference type="InterPro" id="IPR010945">
    <property type="entry name" value="Malate_DH_type2"/>
</dbReference>
<dbReference type="InterPro" id="IPR036291">
    <property type="entry name" value="NAD(P)-bd_dom_sf"/>
</dbReference>
<dbReference type="NCBIfam" id="TIGR01759">
    <property type="entry name" value="MalateDH-SF1"/>
    <property type="match status" value="1"/>
</dbReference>
<dbReference type="NCBIfam" id="NF003916">
    <property type="entry name" value="PRK05442.1"/>
    <property type="match status" value="1"/>
</dbReference>
<dbReference type="PANTHER" id="PTHR23382">
    <property type="entry name" value="MALATE DEHYDROGENASE"/>
    <property type="match status" value="1"/>
</dbReference>
<dbReference type="Pfam" id="PF02866">
    <property type="entry name" value="Ldh_1_C"/>
    <property type="match status" value="1"/>
</dbReference>
<dbReference type="Pfam" id="PF00056">
    <property type="entry name" value="Ldh_1_N"/>
    <property type="match status" value="1"/>
</dbReference>
<dbReference type="PIRSF" id="PIRSF000102">
    <property type="entry name" value="Lac_mal_DH"/>
    <property type="match status" value="1"/>
</dbReference>
<dbReference type="SUPFAM" id="SSF56327">
    <property type="entry name" value="LDH C-terminal domain-like"/>
    <property type="match status" value="1"/>
</dbReference>
<dbReference type="SUPFAM" id="SSF51735">
    <property type="entry name" value="NAD(P)-binding Rossmann-fold domains"/>
    <property type="match status" value="1"/>
</dbReference>
<feature type="chain" id="PRO_1000191607" description="Malate dehydrogenase">
    <location>
        <begin position="1"/>
        <end position="328"/>
    </location>
</feature>
<feature type="active site" description="Proton acceptor" evidence="1">
    <location>
        <position position="189"/>
    </location>
</feature>
<feature type="binding site" evidence="1">
    <location>
        <begin position="11"/>
        <end position="17"/>
    </location>
    <ligand>
        <name>NAD(+)</name>
        <dbReference type="ChEBI" id="CHEBI:57540"/>
    </ligand>
</feature>
<feature type="binding site" evidence="1">
    <location>
        <position position="94"/>
    </location>
    <ligand>
        <name>substrate</name>
    </ligand>
</feature>
<feature type="binding site" evidence="1">
    <location>
        <position position="100"/>
    </location>
    <ligand>
        <name>substrate</name>
    </ligand>
</feature>
<feature type="binding site" evidence="1">
    <location>
        <position position="107"/>
    </location>
    <ligand>
        <name>NAD(+)</name>
        <dbReference type="ChEBI" id="CHEBI:57540"/>
    </ligand>
</feature>
<feature type="binding site" evidence="1">
    <location>
        <position position="114"/>
    </location>
    <ligand>
        <name>NAD(+)</name>
        <dbReference type="ChEBI" id="CHEBI:57540"/>
    </ligand>
</feature>
<feature type="binding site" evidence="1">
    <location>
        <begin position="131"/>
        <end position="133"/>
    </location>
    <ligand>
        <name>NAD(+)</name>
        <dbReference type="ChEBI" id="CHEBI:57540"/>
    </ligand>
</feature>
<feature type="binding site" evidence="1">
    <location>
        <position position="133"/>
    </location>
    <ligand>
        <name>substrate</name>
    </ligand>
</feature>
<feature type="binding site" evidence="1">
    <location>
        <position position="164"/>
    </location>
    <ligand>
        <name>substrate</name>
    </ligand>
</feature>
<name>MDH_ACIBS</name>
<organism>
    <name type="scientific">Acinetobacter baumannii (strain SDF)</name>
    <dbReference type="NCBI Taxonomy" id="509170"/>
    <lineage>
        <taxon>Bacteria</taxon>
        <taxon>Pseudomonadati</taxon>
        <taxon>Pseudomonadota</taxon>
        <taxon>Gammaproteobacteria</taxon>
        <taxon>Moraxellales</taxon>
        <taxon>Moraxellaceae</taxon>
        <taxon>Acinetobacter</taxon>
        <taxon>Acinetobacter calcoaceticus/baumannii complex</taxon>
    </lineage>
</organism>